<protein>
    <recommendedName>
        <fullName evidence="1">Dihydroorotate dehydrogenase (quinone)</fullName>
        <ecNumber evidence="1">1.3.5.2</ecNumber>
    </recommendedName>
    <alternativeName>
        <fullName evidence="1">DHOdehase</fullName>
        <shortName evidence="1">DHOD</shortName>
        <shortName evidence="1">DHODase</shortName>
    </alternativeName>
    <alternativeName>
        <fullName evidence="1">Dihydroorotate oxidase</fullName>
    </alternativeName>
</protein>
<keyword id="KW-1003">Cell membrane</keyword>
<keyword id="KW-0285">Flavoprotein</keyword>
<keyword id="KW-0288">FMN</keyword>
<keyword id="KW-0472">Membrane</keyword>
<keyword id="KW-0560">Oxidoreductase</keyword>
<keyword id="KW-0665">Pyrimidine biosynthesis</keyword>
<proteinExistence type="inferred from homology"/>
<feature type="chain" id="PRO_1000024166" description="Dihydroorotate dehydrogenase (quinone)">
    <location>
        <begin position="1"/>
        <end position="344"/>
    </location>
</feature>
<feature type="active site" description="Nucleophile" evidence="1">
    <location>
        <position position="181"/>
    </location>
</feature>
<feature type="binding site" evidence="1">
    <location>
        <begin position="65"/>
        <end position="69"/>
    </location>
    <ligand>
        <name>FMN</name>
        <dbReference type="ChEBI" id="CHEBI:58210"/>
    </ligand>
</feature>
<feature type="binding site" evidence="1">
    <location>
        <position position="69"/>
    </location>
    <ligand>
        <name>substrate</name>
    </ligand>
</feature>
<feature type="binding site" evidence="1">
    <location>
        <position position="89"/>
    </location>
    <ligand>
        <name>FMN</name>
        <dbReference type="ChEBI" id="CHEBI:58210"/>
    </ligand>
</feature>
<feature type="binding site" evidence="1">
    <location>
        <begin position="114"/>
        <end position="118"/>
    </location>
    <ligand>
        <name>substrate</name>
    </ligand>
</feature>
<feature type="binding site" evidence="1">
    <location>
        <position position="145"/>
    </location>
    <ligand>
        <name>FMN</name>
        <dbReference type="ChEBI" id="CHEBI:58210"/>
    </ligand>
</feature>
<feature type="binding site" evidence="1">
    <location>
        <position position="178"/>
    </location>
    <ligand>
        <name>FMN</name>
        <dbReference type="ChEBI" id="CHEBI:58210"/>
    </ligand>
</feature>
<feature type="binding site" evidence="1">
    <location>
        <position position="178"/>
    </location>
    <ligand>
        <name>substrate</name>
    </ligand>
</feature>
<feature type="binding site" evidence="1">
    <location>
        <position position="183"/>
    </location>
    <ligand>
        <name>substrate</name>
    </ligand>
</feature>
<feature type="binding site" evidence="1">
    <location>
        <position position="215"/>
    </location>
    <ligand>
        <name>FMN</name>
        <dbReference type="ChEBI" id="CHEBI:58210"/>
    </ligand>
</feature>
<feature type="binding site" evidence="1">
    <location>
        <position position="243"/>
    </location>
    <ligand>
        <name>FMN</name>
        <dbReference type="ChEBI" id="CHEBI:58210"/>
    </ligand>
</feature>
<feature type="binding site" evidence="1">
    <location>
        <begin position="244"/>
        <end position="245"/>
    </location>
    <ligand>
        <name>substrate</name>
    </ligand>
</feature>
<feature type="binding site" evidence="1">
    <location>
        <position position="269"/>
    </location>
    <ligand>
        <name>FMN</name>
        <dbReference type="ChEBI" id="CHEBI:58210"/>
    </ligand>
</feature>
<feature type="binding site" evidence="1">
    <location>
        <position position="298"/>
    </location>
    <ligand>
        <name>FMN</name>
        <dbReference type="ChEBI" id="CHEBI:58210"/>
    </ligand>
</feature>
<feature type="binding site" evidence="1">
    <location>
        <begin position="319"/>
        <end position="320"/>
    </location>
    <ligand>
        <name>FMN</name>
        <dbReference type="ChEBI" id="CHEBI:58210"/>
    </ligand>
</feature>
<gene>
    <name evidence="1" type="primary">pyrD</name>
    <name type="ordered locus">CMM_1846</name>
</gene>
<dbReference type="EC" id="1.3.5.2" evidence="1"/>
<dbReference type="EMBL" id="AM711867">
    <property type="protein sequence ID" value="CAN01902.1"/>
    <property type="molecule type" value="Genomic_DNA"/>
</dbReference>
<dbReference type="RefSeq" id="WP_012038533.1">
    <property type="nucleotide sequence ID" value="NC_009480.1"/>
</dbReference>
<dbReference type="SMR" id="A5CS38"/>
<dbReference type="KEGG" id="cmi:CMM_1846"/>
<dbReference type="eggNOG" id="COG0167">
    <property type="taxonomic scope" value="Bacteria"/>
</dbReference>
<dbReference type="HOGENOM" id="CLU_013640_2_0_11"/>
<dbReference type="OrthoDB" id="9802377at2"/>
<dbReference type="UniPathway" id="UPA00070">
    <property type="reaction ID" value="UER00946"/>
</dbReference>
<dbReference type="Proteomes" id="UP000001564">
    <property type="component" value="Chromosome"/>
</dbReference>
<dbReference type="GO" id="GO:0005737">
    <property type="term" value="C:cytoplasm"/>
    <property type="evidence" value="ECO:0007669"/>
    <property type="project" value="InterPro"/>
</dbReference>
<dbReference type="GO" id="GO:0005886">
    <property type="term" value="C:plasma membrane"/>
    <property type="evidence" value="ECO:0007669"/>
    <property type="project" value="UniProtKB-SubCell"/>
</dbReference>
<dbReference type="GO" id="GO:0106430">
    <property type="term" value="F:dihydroorotate dehydrogenase (quinone) activity"/>
    <property type="evidence" value="ECO:0007669"/>
    <property type="project" value="UniProtKB-EC"/>
</dbReference>
<dbReference type="GO" id="GO:0006207">
    <property type="term" value="P:'de novo' pyrimidine nucleobase biosynthetic process"/>
    <property type="evidence" value="ECO:0007669"/>
    <property type="project" value="InterPro"/>
</dbReference>
<dbReference type="GO" id="GO:0044205">
    <property type="term" value="P:'de novo' UMP biosynthetic process"/>
    <property type="evidence" value="ECO:0007669"/>
    <property type="project" value="UniProtKB-UniRule"/>
</dbReference>
<dbReference type="CDD" id="cd04738">
    <property type="entry name" value="DHOD_2_like"/>
    <property type="match status" value="1"/>
</dbReference>
<dbReference type="Gene3D" id="3.20.20.70">
    <property type="entry name" value="Aldolase class I"/>
    <property type="match status" value="1"/>
</dbReference>
<dbReference type="HAMAP" id="MF_00225">
    <property type="entry name" value="DHO_dh_type2"/>
    <property type="match status" value="1"/>
</dbReference>
<dbReference type="InterPro" id="IPR013785">
    <property type="entry name" value="Aldolase_TIM"/>
</dbReference>
<dbReference type="InterPro" id="IPR050074">
    <property type="entry name" value="DHO_dehydrogenase"/>
</dbReference>
<dbReference type="InterPro" id="IPR012135">
    <property type="entry name" value="Dihydroorotate_DH_1_2"/>
</dbReference>
<dbReference type="InterPro" id="IPR005719">
    <property type="entry name" value="Dihydroorotate_DH_2"/>
</dbReference>
<dbReference type="InterPro" id="IPR005720">
    <property type="entry name" value="Dihydroorotate_DH_cat"/>
</dbReference>
<dbReference type="InterPro" id="IPR001295">
    <property type="entry name" value="Dihydroorotate_DH_CS"/>
</dbReference>
<dbReference type="NCBIfam" id="NF003648">
    <property type="entry name" value="PRK05286.2-1"/>
    <property type="match status" value="1"/>
</dbReference>
<dbReference type="NCBIfam" id="NF003652">
    <property type="entry name" value="PRK05286.2-5"/>
    <property type="match status" value="1"/>
</dbReference>
<dbReference type="NCBIfam" id="TIGR01036">
    <property type="entry name" value="pyrD_sub2"/>
    <property type="match status" value="1"/>
</dbReference>
<dbReference type="PANTHER" id="PTHR48109:SF4">
    <property type="entry name" value="DIHYDROOROTATE DEHYDROGENASE (QUINONE), MITOCHONDRIAL"/>
    <property type="match status" value="1"/>
</dbReference>
<dbReference type="PANTHER" id="PTHR48109">
    <property type="entry name" value="DIHYDROOROTATE DEHYDROGENASE (QUINONE), MITOCHONDRIAL-RELATED"/>
    <property type="match status" value="1"/>
</dbReference>
<dbReference type="Pfam" id="PF01180">
    <property type="entry name" value="DHO_dh"/>
    <property type="match status" value="1"/>
</dbReference>
<dbReference type="PIRSF" id="PIRSF000164">
    <property type="entry name" value="DHO_oxidase"/>
    <property type="match status" value="1"/>
</dbReference>
<dbReference type="SUPFAM" id="SSF51395">
    <property type="entry name" value="FMN-linked oxidoreductases"/>
    <property type="match status" value="1"/>
</dbReference>
<dbReference type="PROSITE" id="PS00911">
    <property type="entry name" value="DHODEHASE_1"/>
    <property type="match status" value="1"/>
</dbReference>
<dbReference type="PROSITE" id="PS00912">
    <property type="entry name" value="DHODEHASE_2"/>
    <property type="match status" value="1"/>
</dbReference>
<sequence length="344" mass="36418">MYPLLFRTVLSRMDPEDAHHLASTAIALLPSSGFGWIARRLTAPDPSLAVDALGLRFPSPFGVAAGFDKDAQAVLGLGQLGFGHVEVGTVTAEAQPGNPRPRLFRLIEDRAVINRMGFNNGGAAALADRLRRLRSRRDRPVIGVNIGKTRAVAVDDAVADYVRSARLVAPVADYLAVNVSSPNTPGLRGLQEIELLRPLLTSIRDAADGVPVLVKIAPDLQDAEVERIAELATELGLAGVIATNTTLSRADLRTDAAVVEAAGAGGLSGSPLAPRALEVLRILRRALPAESCVISVGGVETAEDVQARLDAGATLVQGYTAFLYRGPLWARSVNAGLVRIRRTR</sequence>
<organism>
    <name type="scientific">Clavibacter michiganensis subsp. michiganensis (strain NCPPB 382)</name>
    <dbReference type="NCBI Taxonomy" id="443906"/>
    <lineage>
        <taxon>Bacteria</taxon>
        <taxon>Bacillati</taxon>
        <taxon>Actinomycetota</taxon>
        <taxon>Actinomycetes</taxon>
        <taxon>Micrococcales</taxon>
        <taxon>Microbacteriaceae</taxon>
        <taxon>Clavibacter</taxon>
    </lineage>
</organism>
<accession>A5CS38</accession>
<name>PYRD_CLAM3</name>
<reference key="1">
    <citation type="journal article" date="2008" name="J. Bacteriol.">
        <title>The genome sequence of the tomato-pathogenic actinomycete Clavibacter michiganensis subsp. michiganensis NCPPB382 reveals a large island involved in pathogenicity.</title>
        <authorList>
            <person name="Gartemann K.-H."/>
            <person name="Abt B."/>
            <person name="Bekel T."/>
            <person name="Burger A."/>
            <person name="Engemann J."/>
            <person name="Fluegel M."/>
            <person name="Gaigalat L."/>
            <person name="Goesmann A."/>
            <person name="Graefen I."/>
            <person name="Kalinowski J."/>
            <person name="Kaup O."/>
            <person name="Kirchner O."/>
            <person name="Krause L."/>
            <person name="Linke B."/>
            <person name="McHardy A."/>
            <person name="Meyer F."/>
            <person name="Pohle S."/>
            <person name="Rueckert C."/>
            <person name="Schneiker S."/>
            <person name="Zellermann E.-M."/>
            <person name="Puehler A."/>
            <person name="Eichenlaub R."/>
            <person name="Kaiser O."/>
            <person name="Bartels D."/>
        </authorList>
    </citation>
    <scope>NUCLEOTIDE SEQUENCE [LARGE SCALE GENOMIC DNA]</scope>
    <source>
        <strain>NCPPB 382</strain>
    </source>
</reference>
<evidence type="ECO:0000255" key="1">
    <source>
        <dbReference type="HAMAP-Rule" id="MF_00225"/>
    </source>
</evidence>
<comment type="function">
    <text evidence="1">Catalyzes the conversion of dihydroorotate to orotate with quinone as electron acceptor.</text>
</comment>
<comment type="catalytic activity">
    <reaction evidence="1">
        <text>(S)-dihydroorotate + a quinone = orotate + a quinol</text>
        <dbReference type="Rhea" id="RHEA:30187"/>
        <dbReference type="ChEBI" id="CHEBI:24646"/>
        <dbReference type="ChEBI" id="CHEBI:30839"/>
        <dbReference type="ChEBI" id="CHEBI:30864"/>
        <dbReference type="ChEBI" id="CHEBI:132124"/>
        <dbReference type="EC" id="1.3.5.2"/>
    </reaction>
</comment>
<comment type="cofactor">
    <cofactor evidence="1">
        <name>FMN</name>
        <dbReference type="ChEBI" id="CHEBI:58210"/>
    </cofactor>
    <text evidence="1">Binds 1 FMN per subunit.</text>
</comment>
<comment type="pathway">
    <text evidence="1">Pyrimidine metabolism; UMP biosynthesis via de novo pathway; orotate from (S)-dihydroorotate (quinone route): step 1/1.</text>
</comment>
<comment type="subunit">
    <text evidence="1">Monomer.</text>
</comment>
<comment type="subcellular location">
    <subcellularLocation>
        <location evidence="1">Cell membrane</location>
        <topology evidence="1">Peripheral membrane protein</topology>
    </subcellularLocation>
</comment>
<comment type="similarity">
    <text evidence="1">Belongs to the dihydroorotate dehydrogenase family. Type 2 subfamily.</text>
</comment>